<proteinExistence type="inferred from homology"/>
<comment type="function">
    <text evidence="1">Catalyzes the first step in the D-alanylation of lipoteichoic acid (LTA), the activation of D-alanine and its transfer onto the D-alanyl carrier protein (Dcp) DltC. In an ATP-dependent two-step reaction, forms a high energy D-alanyl-AMP intermediate, followed by transfer of the D-alanyl residue as a thiol ester to the phosphopantheinyl prosthetic group of the Dcp. D-alanylation of LTA plays an important role in modulating the properties of the cell wall in Gram-positive bacteria, influencing the net charge of the cell wall.</text>
</comment>
<comment type="catalytic activity">
    <reaction evidence="1">
        <text>holo-[D-alanyl-carrier protein] + D-alanine + ATP = D-alanyl-[D-alanyl-carrier protein] + AMP + diphosphate</text>
        <dbReference type="Rhea" id="RHEA:55132"/>
        <dbReference type="Rhea" id="RHEA-COMP:14102"/>
        <dbReference type="Rhea" id="RHEA-COMP:14103"/>
        <dbReference type="ChEBI" id="CHEBI:30616"/>
        <dbReference type="ChEBI" id="CHEBI:33019"/>
        <dbReference type="ChEBI" id="CHEBI:57416"/>
        <dbReference type="ChEBI" id="CHEBI:64479"/>
        <dbReference type="ChEBI" id="CHEBI:138620"/>
        <dbReference type="ChEBI" id="CHEBI:456215"/>
        <dbReference type="EC" id="6.2.1.54"/>
    </reaction>
</comment>
<comment type="pathway">
    <text evidence="1">Cell wall biogenesis; lipoteichoic acid biosynthesis.</text>
</comment>
<comment type="subcellular location">
    <subcellularLocation>
        <location evidence="1">Cytoplasm</location>
    </subcellularLocation>
</comment>
<comment type="similarity">
    <text evidence="1">Belongs to the ATP-dependent AMP-binding enzyme family. DltA subfamily.</text>
</comment>
<protein>
    <recommendedName>
        <fullName evidence="1">D-alanine--D-alanyl carrier protein ligase</fullName>
        <shortName evidence="1">DCL</shortName>
        <ecNumber evidence="1">6.2.1.54</ecNumber>
    </recommendedName>
    <alternativeName>
        <fullName evidence="1">D-alanine--poly(phosphoribitol) ligase subunit 1</fullName>
    </alternativeName>
    <alternativeName>
        <fullName evidence="1">D-alanine-activating enzyme</fullName>
        <shortName evidence="1">DAE</shortName>
    </alternativeName>
</protein>
<organism>
    <name type="scientific">Bacillus velezensis (strain DSM 23117 / BGSC 10A6 / LMG 26770 / FZB42)</name>
    <name type="common">Bacillus amyloliquefaciens subsp. plantarum</name>
    <dbReference type="NCBI Taxonomy" id="326423"/>
    <lineage>
        <taxon>Bacteria</taxon>
        <taxon>Bacillati</taxon>
        <taxon>Bacillota</taxon>
        <taxon>Bacilli</taxon>
        <taxon>Bacillales</taxon>
        <taxon>Bacillaceae</taxon>
        <taxon>Bacillus</taxon>
        <taxon>Bacillus amyloliquefaciens group</taxon>
    </lineage>
</organism>
<reference key="1">
    <citation type="journal article" date="2007" name="Nat. Biotechnol.">
        <title>Comparative analysis of the complete genome sequence of the plant growth-promoting bacterium Bacillus amyloliquefaciens FZB42.</title>
        <authorList>
            <person name="Chen X.H."/>
            <person name="Koumoutsi A."/>
            <person name="Scholz R."/>
            <person name="Eisenreich A."/>
            <person name="Schneider K."/>
            <person name="Heinemeyer I."/>
            <person name="Morgenstern B."/>
            <person name="Voss B."/>
            <person name="Hess W.R."/>
            <person name="Reva O."/>
            <person name="Junge H."/>
            <person name="Voigt B."/>
            <person name="Jungblut P.R."/>
            <person name="Vater J."/>
            <person name="Suessmuth R."/>
            <person name="Liesegang H."/>
            <person name="Strittmatter A."/>
            <person name="Gottschalk G."/>
            <person name="Borriss R."/>
        </authorList>
    </citation>
    <scope>NUCLEOTIDE SEQUENCE [LARGE SCALE GENOMIC DNA]</scope>
    <source>
        <strain>DSM 23117 / BGSC 10A6 / LMG 26770 / FZB42</strain>
    </source>
</reference>
<sequence length="503" mass="55739">MKLLDAIKTYADAKPQAEAFRSLDHSLTYGELWDLSERVASGIQKHTADGSKAPVLVYGHMEPNMIVSFLGSVKAGRPYIPVDVSIPAERIVKIIESSGAELLISVSGDAVDTGSNLIKTVTPEELAADGDADLSRENWVKELDTFYIIYTSGSTGNPKGVQISADNLQSFTDWICRDFPVGEGKTFLNQAPFSFDLSVMDIFPSLQTGGTLHCVTKDKINKPKVLFEELEKSKLNVWTSTPSFVQMCLMDPGFTQELLPEAEVFMFCGEALPAAVAQELLNRFPKARVFNTYGPTETTVAVTSVEITQQIIDENESLPVGFAKPDMDIFIMDENGNKLPDGEKGEIIIAGPSVSKGYLGEPSLTEKAFFPIDGQWAYHTGDAGYVQDGQIFCQGRLDFQIKLHGYRMELEEIEVHVRQSQYVRTAVVIPYQPNGPVEYLIAAIVPEKHDFEKEFQLTSAIKKELAASLPAYMIPRKFIYQDHIQMTANGKIDRKRIGEEVLV</sequence>
<keyword id="KW-0067">ATP-binding</keyword>
<keyword id="KW-0963">Cytoplasm</keyword>
<keyword id="KW-0436">Ligase</keyword>
<keyword id="KW-0547">Nucleotide-binding</keyword>
<dbReference type="EC" id="6.2.1.54" evidence="1"/>
<dbReference type="EMBL" id="CP000560">
    <property type="protein sequence ID" value="ABS75900.1"/>
    <property type="molecule type" value="Genomic_DNA"/>
</dbReference>
<dbReference type="RefSeq" id="WP_012118761.1">
    <property type="nucleotide sequence ID" value="NC_009725.2"/>
</dbReference>
<dbReference type="SMR" id="A7ZA74"/>
<dbReference type="GeneID" id="93082713"/>
<dbReference type="KEGG" id="bay:RBAM_035710"/>
<dbReference type="HOGENOM" id="CLU_000022_2_12_9"/>
<dbReference type="UniPathway" id="UPA00556"/>
<dbReference type="Proteomes" id="UP000001120">
    <property type="component" value="Chromosome"/>
</dbReference>
<dbReference type="GO" id="GO:0005737">
    <property type="term" value="C:cytoplasm"/>
    <property type="evidence" value="ECO:0007669"/>
    <property type="project" value="UniProtKB-SubCell"/>
</dbReference>
<dbReference type="GO" id="GO:0005524">
    <property type="term" value="F:ATP binding"/>
    <property type="evidence" value="ECO:0007669"/>
    <property type="project" value="UniProtKB-KW"/>
</dbReference>
<dbReference type="GO" id="GO:0047473">
    <property type="term" value="F:D-alanine [D-alanyl carrier protein] ligase activity"/>
    <property type="evidence" value="ECO:0007669"/>
    <property type="project" value="UniProtKB-UniRule"/>
</dbReference>
<dbReference type="GO" id="GO:0070395">
    <property type="term" value="P:lipoteichoic acid biosynthetic process"/>
    <property type="evidence" value="ECO:0007669"/>
    <property type="project" value="UniProtKB-UniRule"/>
</dbReference>
<dbReference type="CDD" id="cd05945">
    <property type="entry name" value="DltA"/>
    <property type="match status" value="1"/>
</dbReference>
<dbReference type="FunFam" id="3.30.300.30:FF:000012">
    <property type="entry name" value="D-alanine--D-alanyl carrier protein ligase"/>
    <property type="match status" value="1"/>
</dbReference>
<dbReference type="Gene3D" id="3.30.300.30">
    <property type="match status" value="1"/>
</dbReference>
<dbReference type="Gene3D" id="3.40.50.12780">
    <property type="entry name" value="N-terminal domain of ligase-like"/>
    <property type="match status" value="1"/>
</dbReference>
<dbReference type="HAMAP" id="MF_00593">
    <property type="entry name" value="DltA"/>
    <property type="match status" value="1"/>
</dbReference>
<dbReference type="InterPro" id="IPR010071">
    <property type="entry name" value="AA_adenyl_dom"/>
</dbReference>
<dbReference type="InterPro" id="IPR025110">
    <property type="entry name" value="AMP-bd_C"/>
</dbReference>
<dbReference type="InterPro" id="IPR045851">
    <property type="entry name" value="AMP-bd_C_sf"/>
</dbReference>
<dbReference type="InterPro" id="IPR020845">
    <property type="entry name" value="AMP-binding_CS"/>
</dbReference>
<dbReference type="InterPro" id="IPR000873">
    <property type="entry name" value="AMP-dep_synth/lig_dom"/>
</dbReference>
<dbReference type="InterPro" id="IPR042099">
    <property type="entry name" value="ANL_N_sf"/>
</dbReference>
<dbReference type="InterPro" id="IPR010072">
    <property type="entry name" value="DltA"/>
</dbReference>
<dbReference type="InterPro" id="IPR044507">
    <property type="entry name" value="DltA-like"/>
</dbReference>
<dbReference type="NCBIfam" id="TIGR01733">
    <property type="entry name" value="AA-adenyl-dom"/>
    <property type="match status" value="1"/>
</dbReference>
<dbReference type="NCBIfam" id="TIGR01734">
    <property type="entry name" value="D-ala-DACP-lig"/>
    <property type="match status" value="1"/>
</dbReference>
<dbReference type="NCBIfam" id="NF003417">
    <property type="entry name" value="PRK04813.1"/>
    <property type="match status" value="1"/>
</dbReference>
<dbReference type="PANTHER" id="PTHR45398">
    <property type="match status" value="1"/>
</dbReference>
<dbReference type="PANTHER" id="PTHR45398:SF1">
    <property type="entry name" value="ENZYME, PUTATIVE (JCVI)-RELATED"/>
    <property type="match status" value="1"/>
</dbReference>
<dbReference type="Pfam" id="PF00501">
    <property type="entry name" value="AMP-binding"/>
    <property type="match status" value="1"/>
</dbReference>
<dbReference type="Pfam" id="PF13193">
    <property type="entry name" value="AMP-binding_C"/>
    <property type="match status" value="1"/>
</dbReference>
<dbReference type="SUPFAM" id="SSF56801">
    <property type="entry name" value="Acetyl-CoA synthetase-like"/>
    <property type="match status" value="1"/>
</dbReference>
<dbReference type="PROSITE" id="PS00455">
    <property type="entry name" value="AMP_BINDING"/>
    <property type="match status" value="1"/>
</dbReference>
<evidence type="ECO:0000255" key="1">
    <source>
        <dbReference type="HAMAP-Rule" id="MF_00593"/>
    </source>
</evidence>
<name>DLTA_BACVZ</name>
<gene>
    <name evidence="1" type="primary">dltA</name>
    <name type="ordered locus">RBAM_035710</name>
</gene>
<feature type="chain" id="PRO_1000025522" description="D-alanine--D-alanyl carrier protein ligase">
    <location>
        <begin position="1"/>
        <end position="503"/>
    </location>
</feature>
<feature type="binding site" evidence="1">
    <location>
        <begin position="151"/>
        <end position="152"/>
    </location>
    <ligand>
        <name>ATP</name>
        <dbReference type="ChEBI" id="CHEBI:30616"/>
    </ligand>
</feature>
<feature type="binding site" evidence="1">
    <location>
        <position position="196"/>
    </location>
    <ligand>
        <name>D-alanine</name>
        <dbReference type="ChEBI" id="CHEBI:57416"/>
    </ligand>
</feature>
<feature type="binding site" evidence="1">
    <location>
        <begin position="291"/>
        <end position="296"/>
    </location>
    <ligand>
        <name>ATP</name>
        <dbReference type="ChEBI" id="CHEBI:30616"/>
    </ligand>
</feature>
<feature type="binding site" evidence="1">
    <location>
        <position position="300"/>
    </location>
    <ligand>
        <name>D-alanine</name>
        <dbReference type="ChEBI" id="CHEBI:57416"/>
    </ligand>
</feature>
<feature type="binding site" evidence="1">
    <location>
        <position position="382"/>
    </location>
    <ligand>
        <name>ATP</name>
        <dbReference type="ChEBI" id="CHEBI:30616"/>
    </ligand>
</feature>
<feature type="binding site" evidence="1">
    <location>
        <position position="491"/>
    </location>
    <ligand>
        <name>ATP</name>
        <dbReference type="ChEBI" id="CHEBI:30616"/>
    </ligand>
</feature>
<feature type="binding site" evidence="1">
    <location>
        <position position="491"/>
    </location>
    <ligand>
        <name>D-alanine</name>
        <dbReference type="ChEBI" id="CHEBI:57416"/>
    </ligand>
</feature>
<accession>A7ZA74</accession>